<proteinExistence type="evidence at transcript level"/>
<comment type="function">
    <text evidence="4 5">Plays a role in the extension of dendrites from phasmid ciliated sensory neurons (PubMed:34115759). May be necessary for initial assembly of the cilium.</text>
</comment>
<comment type="tissue specificity">
    <text evidence="4">Expressed in ciliated sensory neurons of the head (amphid neurons) and the tail in hermaphrodites (phasmid neurons) and males (sensory ray neurons).</text>
</comment>
<comment type="disruption phenotype">
    <text evidence="4">Impaired male mating behavior.</text>
</comment>
<comment type="similarity">
    <text evidence="6">Belongs to the nephrocystin-1 family.</text>
</comment>
<reference key="1">
    <citation type="journal article" date="1998" name="Science">
        <title>Genome sequence of the nematode C. elegans: a platform for investigating biology.</title>
        <authorList>
            <consortium name="The C. elegans sequencing consortium"/>
        </authorList>
    </citation>
    <scope>NUCLEOTIDE SEQUENCE [LARGE SCALE GENOMIC DNA]</scope>
    <source>
        <strain>Bristol N2</strain>
    </source>
</reference>
<reference key="2">
    <citation type="journal article" date="2005" name="J. Am. Soc. Nephrol.">
        <title>Expression and phenotype analysis of the nephrocystin-1 and nephrocystin-4 homologs in Caenorhabditis elegans.</title>
        <authorList>
            <person name="Wolf M.T."/>
            <person name="Lee J."/>
            <person name="Panther F."/>
            <person name="Otto E.A."/>
            <person name="Guan K.L."/>
            <person name="Hildebrandt F."/>
        </authorList>
    </citation>
    <scope>FUNCTION</scope>
    <scope>TISSUE SPECIFICITY</scope>
    <scope>DISRUPTION PHENOTYPE</scope>
</reference>
<reference key="3">
    <citation type="journal article" date="2021" name="PLoS Genet.">
        <title>DYF-4 regulates patched-related/DAF-6-mediated sensory compartment formation in C. elegans.</title>
        <authorList>
            <person name="Hong H."/>
            <person name="Chen H."/>
            <person name="Zhang Y."/>
            <person name="Wu Z."/>
            <person name="Zhang Y."/>
            <person name="Zhang Y."/>
            <person name="Hu Z."/>
            <person name="Zhang J.V."/>
            <person name="Ling K."/>
            <person name="Hu J."/>
            <person name="Wei Q."/>
        </authorList>
    </citation>
    <scope>FUNCTION</scope>
</reference>
<organism>
    <name type="scientific">Caenorhabditis elegans</name>
    <dbReference type="NCBI Taxonomy" id="6239"/>
    <lineage>
        <taxon>Eukaryota</taxon>
        <taxon>Metazoa</taxon>
        <taxon>Ecdysozoa</taxon>
        <taxon>Nematoda</taxon>
        <taxon>Chromadorea</taxon>
        <taxon>Rhabditida</taxon>
        <taxon>Rhabditina</taxon>
        <taxon>Rhabditomorpha</taxon>
        <taxon>Rhabditoidea</taxon>
        <taxon>Rhabditidae</taxon>
        <taxon>Peloderinae</taxon>
        <taxon>Caenorhabditis</taxon>
    </lineage>
</organism>
<sequence length="682" mass="78796">MSIFGSILSLQDAINRFPQFEYQINRLEKEQKDTEAASRASFRKHFVRQCQELHRQLDDHRNRIEKAKTDETYKKENALEQLDKLKQRLTALSPEKEQLSFSVSVDSQSEEEKPKMAAIGRRKSTMYNDDESEDSDNDSEIIETDVQLDDPLPSQPQPPQQQHQQPQPKPRQPITITKPLESKTLNERQELDEVISRLQNPSRGDSGEVMEPVVVRGNVFVAIDSWDAEAEGDLELIKGKKYRITQTRSDGWWTALDEYGQRGLVPKTYLQHVKEKPKNVPSKVSSRLGVRDSVIGISTTTDPSRREANRQASRVDDCLGKAYDNDTHLSLVCHMAPRLSTSNIGFHDLFWSHYKDQVYKRTVHISKIIRLVRFEKMPLIEHKALVRMALVDITNPKSTQIVSNVHTLVPRVKSSTWYFEKKESQTRSCIEFSDFVLRSNYRSPTVVLVVEASHLVKTQIGIEEKSLGHTYLRLIIDDKAVPSRTNVLYLDDEVMTKMKLPEASKRRVLVQVMDVPKDKVSYVDSLPDVIVFNALYLPFFHFYRRRAGTILIRDNRNPLSAEFISDPLLSVFPFVCDQHDIMDIMLKIWKTKKKVLAKKNEAEQTAEFFQTFLHTAFFIHGIRMISYDVKDDLTLSIRQQTMQRFVDALNKGLFKQFIADQQCKPINIIDYSLDLLGNHSID</sequence>
<name>NPHP1_CAEEL</name>
<evidence type="ECO:0000255" key="1"/>
<evidence type="ECO:0000255" key="2">
    <source>
        <dbReference type="PROSITE-ProRule" id="PRU00192"/>
    </source>
</evidence>
<evidence type="ECO:0000256" key="3">
    <source>
        <dbReference type="SAM" id="MobiDB-lite"/>
    </source>
</evidence>
<evidence type="ECO:0000269" key="4">
    <source>
    </source>
</evidence>
<evidence type="ECO:0000269" key="5">
    <source>
    </source>
</evidence>
<evidence type="ECO:0000305" key="6"/>
<evidence type="ECO:0000312" key="7">
    <source>
        <dbReference type="WormBase" id="M28.7"/>
    </source>
</evidence>
<keyword id="KW-0085">Behavior</keyword>
<keyword id="KW-0970">Cilium biogenesis/degradation</keyword>
<keyword id="KW-0175">Coiled coil</keyword>
<keyword id="KW-1185">Reference proteome</keyword>
<keyword id="KW-0728">SH3 domain</keyword>
<protein>
    <recommendedName>
        <fullName>Nephrocystin-1-like protein</fullName>
    </recommendedName>
    <alternativeName>
        <fullName>Nephronophthisis homolog</fullName>
    </alternativeName>
</protein>
<dbReference type="EMBL" id="BX284602">
    <property type="protein sequence ID" value="CAA90133.1"/>
    <property type="molecule type" value="Genomic_DNA"/>
</dbReference>
<dbReference type="PIR" id="T23813">
    <property type="entry name" value="T23813"/>
</dbReference>
<dbReference type="RefSeq" id="NP_496298.1">
    <property type="nucleotide sequence ID" value="NM_063897.5"/>
</dbReference>
<dbReference type="SMR" id="O17972"/>
<dbReference type="BioGRID" id="39957">
    <property type="interactions" value="11"/>
</dbReference>
<dbReference type="FunCoup" id="O17972">
    <property type="interactions" value="107"/>
</dbReference>
<dbReference type="IntAct" id="O17972">
    <property type="interactions" value="11"/>
</dbReference>
<dbReference type="STRING" id="6239.M28.7.1"/>
<dbReference type="PaxDb" id="6239-M28.7"/>
<dbReference type="EnsemblMetazoa" id="M28.7.1">
    <property type="protein sequence ID" value="M28.7.1"/>
    <property type="gene ID" value="WBGene00010898"/>
</dbReference>
<dbReference type="GeneID" id="174643"/>
<dbReference type="KEGG" id="cel:CELE_M28.7"/>
<dbReference type="UCSC" id="M28.7">
    <property type="organism name" value="c. elegans"/>
</dbReference>
<dbReference type="AGR" id="WB:WBGene00010898"/>
<dbReference type="CTD" id="174643"/>
<dbReference type="WormBase" id="M28.7">
    <property type="protein sequence ID" value="CE16278"/>
    <property type="gene ID" value="WBGene00010898"/>
    <property type="gene designation" value="nphp-1"/>
</dbReference>
<dbReference type="eggNOG" id="ENOG502QU7K">
    <property type="taxonomic scope" value="Eukaryota"/>
</dbReference>
<dbReference type="GeneTree" id="ENSGT00390000007701"/>
<dbReference type="HOGENOM" id="CLU_403986_0_0_1"/>
<dbReference type="InParanoid" id="O17972"/>
<dbReference type="OMA" id="VRFEKMP"/>
<dbReference type="OrthoDB" id="5340910at2759"/>
<dbReference type="PhylomeDB" id="O17972"/>
<dbReference type="PRO" id="PR:O17972"/>
<dbReference type="Proteomes" id="UP000001940">
    <property type="component" value="Chromosome II"/>
</dbReference>
<dbReference type="Bgee" id="WBGene00010898">
    <property type="expression patterns" value="Expressed in pharyngeal muscle cell (C elegans) and 3 other cell types or tissues"/>
</dbReference>
<dbReference type="GO" id="GO:0036064">
    <property type="term" value="C:ciliary basal body"/>
    <property type="evidence" value="ECO:0000314"/>
    <property type="project" value="UniProtKB"/>
</dbReference>
<dbReference type="GO" id="GO:0097546">
    <property type="term" value="C:ciliary base"/>
    <property type="evidence" value="ECO:0000314"/>
    <property type="project" value="WormBase"/>
</dbReference>
<dbReference type="GO" id="GO:0035869">
    <property type="term" value="C:ciliary transition zone"/>
    <property type="evidence" value="ECO:0000314"/>
    <property type="project" value="WormBase"/>
</dbReference>
<dbReference type="GO" id="GO:0005929">
    <property type="term" value="C:cilium"/>
    <property type="evidence" value="ECO:0000318"/>
    <property type="project" value="GO_Central"/>
</dbReference>
<dbReference type="GO" id="GO:0005737">
    <property type="term" value="C:cytoplasm"/>
    <property type="evidence" value="ECO:0000318"/>
    <property type="project" value="GO_Central"/>
</dbReference>
<dbReference type="GO" id="GO:0097730">
    <property type="term" value="C:non-motile cilium"/>
    <property type="evidence" value="ECO:0000314"/>
    <property type="project" value="WormBase"/>
</dbReference>
<dbReference type="GO" id="GO:0008340">
    <property type="term" value="P:determination of adult lifespan"/>
    <property type="evidence" value="ECO:0000315"/>
    <property type="project" value="WormBase"/>
</dbReference>
<dbReference type="GO" id="GO:0023041">
    <property type="term" value="P:neuronal signal transduction"/>
    <property type="evidence" value="ECO:0000305"/>
    <property type="project" value="WormBase"/>
</dbReference>
<dbReference type="GO" id="GO:1905515">
    <property type="term" value="P:non-motile cilium assembly"/>
    <property type="evidence" value="ECO:0000315"/>
    <property type="project" value="WormBase"/>
</dbReference>
<dbReference type="GO" id="GO:0008104">
    <property type="term" value="P:protein localization"/>
    <property type="evidence" value="ECO:0000316"/>
    <property type="project" value="WormBase"/>
</dbReference>
<dbReference type="GO" id="GO:0090251">
    <property type="term" value="P:protein localization involved in establishment of planar polarity"/>
    <property type="evidence" value="ECO:0000318"/>
    <property type="project" value="GO_Central"/>
</dbReference>
<dbReference type="GO" id="GO:0034606">
    <property type="term" value="P:response to hermaphrodite contact"/>
    <property type="evidence" value="ECO:0000316"/>
    <property type="project" value="WormBase"/>
</dbReference>
<dbReference type="GO" id="GO:0034607">
    <property type="term" value="P:turning behavior involved in mating"/>
    <property type="evidence" value="ECO:0000316"/>
    <property type="project" value="WormBase"/>
</dbReference>
<dbReference type="Gene3D" id="2.30.30.40">
    <property type="entry name" value="SH3 Domains"/>
    <property type="match status" value="1"/>
</dbReference>
<dbReference type="InterPro" id="IPR039687">
    <property type="entry name" value="NPHP1"/>
</dbReference>
<dbReference type="InterPro" id="IPR036028">
    <property type="entry name" value="SH3-like_dom_sf"/>
</dbReference>
<dbReference type="InterPro" id="IPR001452">
    <property type="entry name" value="SH3_domain"/>
</dbReference>
<dbReference type="PANTHER" id="PTHR15176">
    <property type="entry name" value="NEPHROCYSTIN"/>
    <property type="match status" value="1"/>
</dbReference>
<dbReference type="PANTHER" id="PTHR15176:SF1">
    <property type="entry name" value="NEPHROCYSTIN-1"/>
    <property type="match status" value="1"/>
</dbReference>
<dbReference type="Pfam" id="PF00018">
    <property type="entry name" value="SH3_1"/>
    <property type="match status" value="1"/>
</dbReference>
<dbReference type="SMART" id="SM00326">
    <property type="entry name" value="SH3"/>
    <property type="match status" value="1"/>
</dbReference>
<dbReference type="SUPFAM" id="SSF50044">
    <property type="entry name" value="SH3-domain"/>
    <property type="match status" value="1"/>
</dbReference>
<dbReference type="PROSITE" id="PS50002">
    <property type="entry name" value="SH3"/>
    <property type="match status" value="1"/>
</dbReference>
<gene>
    <name evidence="7" type="primary">nphp-1</name>
    <name evidence="7" type="ORF">M28.7</name>
</gene>
<accession>O17972</accession>
<accession>Q21570</accession>
<feature type="chain" id="PRO_0000159587" description="Nephrocystin-1-like protein">
    <location>
        <begin position="1"/>
        <end position="682"/>
    </location>
</feature>
<feature type="domain" description="SH3" evidence="2">
    <location>
        <begin position="215"/>
        <end position="275"/>
    </location>
</feature>
<feature type="region of interest" description="Disordered" evidence="3">
    <location>
        <begin position="96"/>
        <end position="188"/>
    </location>
</feature>
<feature type="coiled-coil region" evidence="1">
    <location>
        <begin position="10"/>
        <end position="100"/>
    </location>
</feature>
<feature type="compositionally biased region" description="Acidic residues" evidence="3">
    <location>
        <begin position="128"/>
        <end position="148"/>
    </location>
</feature>